<gene>
    <name evidence="1" type="primary">tatB</name>
    <name type="ordered locus">HP_1060</name>
</gene>
<comment type="function">
    <text evidence="1">Part of the twin-arginine translocation (Tat) system that transports large folded proteins containing a characteristic twin-arginine motif in their signal peptide across membranes. Together with TatC, TatB is part of a receptor directly interacting with Tat signal peptides. TatB may form an oligomeric binding site that transiently accommodates folded Tat precursor proteins before their translocation.</text>
</comment>
<comment type="subunit">
    <text evidence="1">The Tat system comprises two distinct complexes: a TatABC complex, containing multiple copies of TatA, TatB and TatC subunits, and a separate TatA complex, containing only TatA subunits. Substrates initially bind to the TatABC complex, which probably triggers association of the separate TatA complex to form the active translocon.</text>
</comment>
<comment type="subcellular location">
    <subcellularLocation>
        <location evidence="1">Cell inner membrane</location>
        <topology evidence="1">Single-pass membrane protein</topology>
    </subcellularLocation>
</comment>
<comment type="similarity">
    <text evidence="1">Belongs to the TatB family.</text>
</comment>
<organism>
    <name type="scientific">Helicobacter pylori (strain ATCC 700392 / 26695)</name>
    <name type="common">Campylobacter pylori</name>
    <dbReference type="NCBI Taxonomy" id="85962"/>
    <lineage>
        <taxon>Bacteria</taxon>
        <taxon>Pseudomonadati</taxon>
        <taxon>Campylobacterota</taxon>
        <taxon>Epsilonproteobacteria</taxon>
        <taxon>Campylobacterales</taxon>
        <taxon>Helicobacteraceae</taxon>
        <taxon>Helicobacter</taxon>
    </lineage>
</organism>
<feature type="chain" id="PRO_0000192658" description="Sec-independent protein translocase protein TatB">
    <location>
        <begin position="1"/>
        <end position="160"/>
    </location>
</feature>
<feature type="transmembrane region" description="Helical" evidence="1">
    <location>
        <begin position="1"/>
        <end position="21"/>
    </location>
</feature>
<feature type="region of interest" description="Disordered" evidence="2">
    <location>
        <begin position="118"/>
        <end position="160"/>
    </location>
</feature>
<feature type="compositionally biased region" description="Basic and acidic residues" evidence="2">
    <location>
        <begin position="128"/>
        <end position="140"/>
    </location>
</feature>
<feature type="compositionally biased region" description="Basic and acidic residues" evidence="2">
    <location>
        <begin position="149"/>
        <end position="160"/>
    </location>
</feature>
<name>TATB_HELPY</name>
<proteinExistence type="inferred from homology"/>
<protein>
    <recommendedName>
        <fullName evidence="1">Sec-independent protein translocase protein TatB</fullName>
    </recommendedName>
</protein>
<sequence>MFGMGFFEILVVLVVAIIFLGPEKFPQAVVDVVKFFRAVKKTLNDAKDTLDKEINIEEIKKETLEYQKLFENKVESLKGVKIEELEDAKVTAENEIKSIQDLMQDYQKSLETNTIPNHLNEEVSNEEALNKEVSSDESPKEVQLATDNNTKEHDKEKENV</sequence>
<accession>O25700</accession>
<evidence type="ECO:0000255" key="1">
    <source>
        <dbReference type="HAMAP-Rule" id="MF_00237"/>
    </source>
</evidence>
<evidence type="ECO:0000256" key="2">
    <source>
        <dbReference type="SAM" id="MobiDB-lite"/>
    </source>
</evidence>
<dbReference type="EMBL" id="AE000511">
    <property type="protein sequence ID" value="AAD08110.1"/>
    <property type="molecule type" value="Genomic_DNA"/>
</dbReference>
<dbReference type="PIR" id="D64652">
    <property type="entry name" value="D64652"/>
</dbReference>
<dbReference type="RefSeq" id="NP_207851.1">
    <property type="nucleotide sequence ID" value="NC_000915.1"/>
</dbReference>
<dbReference type="RefSeq" id="WP_000467616.1">
    <property type="nucleotide sequence ID" value="NC_018939.1"/>
</dbReference>
<dbReference type="SMR" id="O25700"/>
<dbReference type="FunCoup" id="O25700">
    <property type="interactions" value="149"/>
</dbReference>
<dbReference type="IntAct" id="O25700">
    <property type="interactions" value="1"/>
</dbReference>
<dbReference type="STRING" id="85962.HP_1060"/>
<dbReference type="PaxDb" id="85962-C694_05480"/>
<dbReference type="EnsemblBacteria" id="AAD08110">
    <property type="protein sequence ID" value="AAD08110"/>
    <property type="gene ID" value="HP_1060"/>
</dbReference>
<dbReference type="KEGG" id="heo:C694_05480"/>
<dbReference type="KEGG" id="hpy:HP_1060"/>
<dbReference type="PATRIC" id="fig|85962.47.peg.1139"/>
<dbReference type="eggNOG" id="COG1826">
    <property type="taxonomic scope" value="Bacteria"/>
</dbReference>
<dbReference type="InParanoid" id="O25700"/>
<dbReference type="OrthoDB" id="5373084at2"/>
<dbReference type="Proteomes" id="UP000000429">
    <property type="component" value="Chromosome"/>
</dbReference>
<dbReference type="GO" id="GO:0033281">
    <property type="term" value="C:TAT protein transport complex"/>
    <property type="evidence" value="ECO:0007669"/>
    <property type="project" value="UniProtKB-UniRule"/>
</dbReference>
<dbReference type="GO" id="GO:0008320">
    <property type="term" value="F:protein transmembrane transporter activity"/>
    <property type="evidence" value="ECO:0007669"/>
    <property type="project" value="UniProtKB-UniRule"/>
</dbReference>
<dbReference type="GO" id="GO:0043953">
    <property type="term" value="P:protein transport by the Tat complex"/>
    <property type="evidence" value="ECO:0007669"/>
    <property type="project" value="UniProtKB-UniRule"/>
</dbReference>
<dbReference type="Gene3D" id="1.20.5.3310">
    <property type="match status" value="1"/>
</dbReference>
<dbReference type="HAMAP" id="MF_00237">
    <property type="entry name" value="TatB"/>
    <property type="match status" value="1"/>
</dbReference>
<dbReference type="InterPro" id="IPR018448">
    <property type="entry name" value="TatB"/>
</dbReference>
<dbReference type="NCBIfam" id="TIGR01410">
    <property type="entry name" value="tatB"/>
    <property type="match status" value="1"/>
</dbReference>
<dbReference type="PANTHER" id="PTHR33162">
    <property type="entry name" value="SEC-INDEPENDENT PROTEIN TRANSLOCASE PROTEIN TATA, CHLOROPLASTIC"/>
    <property type="match status" value="1"/>
</dbReference>
<dbReference type="PANTHER" id="PTHR33162:SF1">
    <property type="entry name" value="SEC-INDEPENDENT PROTEIN TRANSLOCASE PROTEIN TATA, CHLOROPLASTIC"/>
    <property type="match status" value="1"/>
</dbReference>
<dbReference type="PRINTS" id="PR01506">
    <property type="entry name" value="TATBPROTEIN"/>
</dbReference>
<reference key="1">
    <citation type="journal article" date="1997" name="Nature">
        <title>The complete genome sequence of the gastric pathogen Helicobacter pylori.</title>
        <authorList>
            <person name="Tomb J.-F."/>
            <person name="White O."/>
            <person name="Kerlavage A.R."/>
            <person name="Clayton R.A."/>
            <person name="Sutton G.G."/>
            <person name="Fleischmann R.D."/>
            <person name="Ketchum K.A."/>
            <person name="Klenk H.-P."/>
            <person name="Gill S.R."/>
            <person name="Dougherty B.A."/>
            <person name="Nelson K.E."/>
            <person name="Quackenbush J."/>
            <person name="Zhou L."/>
            <person name="Kirkness E.F."/>
            <person name="Peterson S.N."/>
            <person name="Loftus B.J."/>
            <person name="Richardson D.L."/>
            <person name="Dodson R.J."/>
            <person name="Khalak H.G."/>
            <person name="Glodek A."/>
            <person name="McKenney K."/>
            <person name="FitzGerald L.M."/>
            <person name="Lee N."/>
            <person name="Adams M.D."/>
            <person name="Hickey E.K."/>
            <person name="Berg D.E."/>
            <person name="Gocayne J.D."/>
            <person name="Utterback T.R."/>
            <person name="Peterson J.D."/>
            <person name="Kelley J.M."/>
            <person name="Cotton M.D."/>
            <person name="Weidman J.F."/>
            <person name="Fujii C."/>
            <person name="Bowman C."/>
            <person name="Watthey L."/>
            <person name="Wallin E."/>
            <person name="Hayes W.S."/>
            <person name="Borodovsky M."/>
            <person name="Karp P.D."/>
            <person name="Smith H.O."/>
            <person name="Fraser C.M."/>
            <person name="Venter J.C."/>
        </authorList>
    </citation>
    <scope>NUCLEOTIDE SEQUENCE [LARGE SCALE GENOMIC DNA]</scope>
    <source>
        <strain>ATCC 700392 / 26695</strain>
    </source>
</reference>
<keyword id="KW-0997">Cell inner membrane</keyword>
<keyword id="KW-1003">Cell membrane</keyword>
<keyword id="KW-0472">Membrane</keyword>
<keyword id="KW-0653">Protein transport</keyword>
<keyword id="KW-1185">Reference proteome</keyword>
<keyword id="KW-0811">Translocation</keyword>
<keyword id="KW-0812">Transmembrane</keyword>
<keyword id="KW-1133">Transmembrane helix</keyword>
<keyword id="KW-0813">Transport</keyword>